<evidence type="ECO:0000305" key="1"/>
<keyword id="KW-0158">Chromosome</keyword>
<keyword id="KW-0903">Direct protein sequencing</keyword>
<keyword id="KW-0226">DNA condensation</keyword>
<keyword id="KW-0238">DNA-binding</keyword>
<keyword id="KW-0539">Nucleus</keyword>
<keyword id="KW-1185">Reference proteome</keyword>
<protein>
    <recommendedName>
        <fullName>Histone H5</fullName>
    </recommendedName>
</protein>
<proteinExistence type="evidence at protein level"/>
<accession>P18638</accession>
<comment type="function">
    <text>Histone H5 performs the same function as H1, being necessary for the condensation of nucleosome chains into higher order structures, and replaces histone H1 in certain cells.</text>
</comment>
<comment type="subcellular location">
    <subcellularLocation>
        <location>Nucleus</location>
    </subcellularLocation>
    <subcellularLocation>
        <location>Chromosome</location>
    </subcellularLocation>
</comment>
<comment type="tissue specificity">
    <text>Erythroid cells.</text>
</comment>
<comment type="similarity">
    <text evidence="1">Belongs to the histone H1/H5 family.</text>
</comment>
<reference key="1">
    <citation type="journal article" date="1976" name="Biochem. Biophys. Res. Commun.">
        <title>Species variability of N-terminal sequence of avian erythrocyte-specific histone H5.</title>
        <authorList>
            <person name="Seligy V."/>
            <person name="Roy C."/>
            <person name="Dove M."/>
            <person name="Yaguchi M."/>
        </authorList>
    </citation>
    <scope>PROTEIN SEQUENCE</scope>
</reference>
<organism>
    <name type="scientific">Coturnix japonica</name>
    <name type="common">Japanese quail</name>
    <name type="synonym">Coturnix coturnix japonica</name>
    <dbReference type="NCBI Taxonomy" id="93934"/>
    <lineage>
        <taxon>Eukaryota</taxon>
        <taxon>Metazoa</taxon>
        <taxon>Chordata</taxon>
        <taxon>Craniata</taxon>
        <taxon>Vertebrata</taxon>
        <taxon>Euteleostomi</taxon>
        <taxon>Archelosauria</taxon>
        <taxon>Archosauria</taxon>
        <taxon>Dinosauria</taxon>
        <taxon>Saurischia</taxon>
        <taxon>Theropoda</taxon>
        <taxon>Coelurosauria</taxon>
        <taxon>Aves</taxon>
        <taxon>Neognathae</taxon>
        <taxon>Galloanserae</taxon>
        <taxon>Galliformes</taxon>
        <taxon>Phasianidae</taxon>
        <taxon>Perdicinae</taxon>
        <taxon>Coturnix</taxon>
    </lineage>
</organism>
<dbReference type="Proteomes" id="UP000694412">
    <property type="component" value="Unplaced"/>
</dbReference>
<dbReference type="GO" id="GO:0005694">
    <property type="term" value="C:chromosome"/>
    <property type="evidence" value="ECO:0007669"/>
    <property type="project" value="UniProtKB-SubCell"/>
</dbReference>
<dbReference type="GO" id="GO:0005634">
    <property type="term" value="C:nucleus"/>
    <property type="evidence" value="ECO:0007669"/>
    <property type="project" value="UniProtKB-SubCell"/>
</dbReference>
<dbReference type="GO" id="GO:0003677">
    <property type="term" value="F:DNA binding"/>
    <property type="evidence" value="ECO:0007669"/>
    <property type="project" value="UniProtKB-KW"/>
</dbReference>
<dbReference type="GO" id="GO:0030261">
    <property type="term" value="P:chromosome condensation"/>
    <property type="evidence" value="ECO:0007669"/>
    <property type="project" value="UniProtKB-KW"/>
</dbReference>
<name>H5_COTJA</name>
<sequence>TESLVLSPAPAKPKRA</sequence>
<feature type="chain" id="PRO_0000196007" description="Histone H5">
    <location>
        <begin position="1"/>
        <end position="16" status="greater than"/>
    </location>
</feature>
<feature type="non-terminal residue">
    <location>
        <position position="16"/>
    </location>
</feature>